<accession>Q41274</accession>
<evidence type="ECO:0000255" key="1">
    <source>
        <dbReference type="PROSITE-ProRule" id="PRU00251"/>
    </source>
</evidence>
<evidence type="ECO:0000255" key="2">
    <source>
        <dbReference type="PROSITE-ProRule" id="PRU00629"/>
    </source>
</evidence>
<organism>
    <name type="scientific">Sinapis alba</name>
    <name type="common">White mustard</name>
    <name type="synonym">Brassica hirta</name>
    <dbReference type="NCBI Taxonomy" id="3728"/>
    <lineage>
        <taxon>Eukaryota</taxon>
        <taxon>Viridiplantae</taxon>
        <taxon>Streptophyta</taxon>
        <taxon>Embryophyta</taxon>
        <taxon>Tracheophyta</taxon>
        <taxon>Spermatophyta</taxon>
        <taxon>Magnoliopsida</taxon>
        <taxon>eudicotyledons</taxon>
        <taxon>Gunneridae</taxon>
        <taxon>Pentapetalae</taxon>
        <taxon>rosids</taxon>
        <taxon>malvids</taxon>
        <taxon>Brassicales</taxon>
        <taxon>Brassicaceae</taxon>
        <taxon>Brassiceae</taxon>
        <taxon>Sinapis</taxon>
    </lineage>
</organism>
<proteinExistence type="evidence at transcript level"/>
<reference key="1">
    <citation type="journal article" date="1996" name="Plant J.">
        <title>Identification of two MADS box genes that are expressed in the apical meristem of the long-day plant Sinapis alba in transition to flowering.</title>
        <authorList>
            <person name="Menzel G."/>
            <person name="Apel K."/>
            <person name="Melzer S."/>
        </authorList>
    </citation>
    <scope>NUCLEOTIDE SEQUENCE [MRNA]</scope>
    <source>
        <tissue>Flower</tissue>
    </source>
</reference>
<dbReference type="EMBL" id="U25695">
    <property type="protein sequence ID" value="AAB41525.1"/>
    <property type="molecule type" value="mRNA"/>
</dbReference>
<dbReference type="SMR" id="Q41274"/>
<dbReference type="OrthoDB" id="1933443at2759"/>
<dbReference type="GO" id="GO:0005634">
    <property type="term" value="C:nucleus"/>
    <property type="evidence" value="ECO:0007669"/>
    <property type="project" value="UniProtKB-SubCell"/>
</dbReference>
<dbReference type="GO" id="GO:0003700">
    <property type="term" value="F:DNA-binding transcription factor activity"/>
    <property type="evidence" value="ECO:0007669"/>
    <property type="project" value="InterPro"/>
</dbReference>
<dbReference type="GO" id="GO:0046983">
    <property type="term" value="F:protein dimerization activity"/>
    <property type="evidence" value="ECO:0007669"/>
    <property type="project" value="InterPro"/>
</dbReference>
<dbReference type="GO" id="GO:0000977">
    <property type="term" value="F:RNA polymerase II transcription regulatory region sequence-specific DNA binding"/>
    <property type="evidence" value="ECO:0007669"/>
    <property type="project" value="InterPro"/>
</dbReference>
<dbReference type="GO" id="GO:0045944">
    <property type="term" value="P:positive regulation of transcription by RNA polymerase II"/>
    <property type="evidence" value="ECO:0007669"/>
    <property type="project" value="InterPro"/>
</dbReference>
<dbReference type="CDD" id="cd00265">
    <property type="entry name" value="MADS_MEF2_like"/>
    <property type="match status" value="1"/>
</dbReference>
<dbReference type="FunFam" id="3.40.1810.10:FF:000003">
    <property type="entry name" value="MADS-box transcription factor MADS-MC"/>
    <property type="match status" value="1"/>
</dbReference>
<dbReference type="Gene3D" id="3.40.1810.10">
    <property type="entry name" value="Transcription factor, MADS-box"/>
    <property type="match status" value="1"/>
</dbReference>
<dbReference type="InterPro" id="IPR050142">
    <property type="entry name" value="MADS-box/MEF2_TF"/>
</dbReference>
<dbReference type="InterPro" id="IPR033896">
    <property type="entry name" value="MEF2-like_N"/>
</dbReference>
<dbReference type="InterPro" id="IPR002487">
    <property type="entry name" value="TF_Kbox"/>
</dbReference>
<dbReference type="InterPro" id="IPR002100">
    <property type="entry name" value="TF_MADSbox"/>
</dbReference>
<dbReference type="InterPro" id="IPR036879">
    <property type="entry name" value="TF_MADSbox_sf"/>
</dbReference>
<dbReference type="PANTHER" id="PTHR48019">
    <property type="entry name" value="SERUM RESPONSE FACTOR HOMOLOG"/>
    <property type="match status" value="1"/>
</dbReference>
<dbReference type="Pfam" id="PF01486">
    <property type="entry name" value="K-box"/>
    <property type="match status" value="1"/>
</dbReference>
<dbReference type="Pfam" id="PF00319">
    <property type="entry name" value="SRF-TF"/>
    <property type="match status" value="1"/>
</dbReference>
<dbReference type="PRINTS" id="PR00404">
    <property type="entry name" value="MADSDOMAIN"/>
</dbReference>
<dbReference type="SMART" id="SM00432">
    <property type="entry name" value="MADS"/>
    <property type="match status" value="1"/>
</dbReference>
<dbReference type="SUPFAM" id="SSF55455">
    <property type="entry name" value="SRF-like"/>
    <property type="match status" value="1"/>
</dbReference>
<dbReference type="PROSITE" id="PS51297">
    <property type="entry name" value="K_BOX"/>
    <property type="match status" value="1"/>
</dbReference>
<dbReference type="PROSITE" id="PS00350">
    <property type="entry name" value="MADS_BOX_1"/>
    <property type="match status" value="1"/>
</dbReference>
<dbReference type="PROSITE" id="PS50066">
    <property type="entry name" value="MADS_BOX_2"/>
    <property type="match status" value="1"/>
</dbReference>
<gene>
    <name type="primary">AGL8</name>
</gene>
<name>AGL8_SINAL</name>
<keyword id="KW-0238">DNA-binding</keyword>
<keyword id="KW-0539">Nucleus</keyword>
<keyword id="KW-0804">Transcription</keyword>
<keyword id="KW-0805">Transcription regulation</keyword>
<protein>
    <recommendedName>
        <fullName>Agamous-like MADS-box protein AGL8 homolog</fullName>
        <shortName>MADS B</shortName>
    </recommendedName>
</protein>
<sequence length="241" mass="27661">MGRGRVQLKRIENKINRQVTFSKRRSGLLKKAHEISVLCDAEVALVIFSSKGKLFEYSTDSCMEKILERYDRYLYSDKQLVGRDISQSENWVLEHAKLKARVEVLEKNKRNFMGEDLDSLSLKELQSLEHQLHAAIKSIRSRKNQAMFESISALQKKDKVLQDHNNALLKKIKEREKNTVHQEVQLIQCSNNSSILQPQYCLTSSRDGFVGRVEGENEGASSLAEPNSLLPAWMLRPTTNE</sequence>
<comment type="function">
    <text>Probable transcription factor.</text>
</comment>
<comment type="subcellular location">
    <subcellularLocation>
        <location evidence="1">Nucleus</location>
    </subcellularLocation>
</comment>
<comment type="developmental stage">
    <text>Expressed in apical meristems in transition to flowering.</text>
</comment>
<feature type="chain" id="PRO_0000199462" description="Agamous-like MADS-box protein AGL8 homolog">
    <location>
        <begin position="1"/>
        <end position="241"/>
    </location>
</feature>
<feature type="domain" description="MADS-box" evidence="1">
    <location>
        <begin position="3"/>
        <end position="57"/>
    </location>
</feature>
<feature type="domain" description="K-box" evidence="2">
    <location>
        <begin position="88"/>
        <end position="178"/>
    </location>
</feature>